<gene>
    <name evidence="1" type="primary">trpR</name>
    <name type="ordered locus">CGSHiEE_07910</name>
</gene>
<feature type="chain" id="PRO_1000014043" description="Trp operon repressor homolog">
    <location>
        <begin position="1"/>
        <end position="101"/>
    </location>
</feature>
<feature type="DNA-binding region" evidence="1">
    <location>
        <begin position="59"/>
        <end position="82"/>
    </location>
</feature>
<name>TRPR_HAEIE</name>
<evidence type="ECO:0000255" key="1">
    <source>
        <dbReference type="HAMAP-Rule" id="MF_00475"/>
    </source>
</evidence>
<comment type="function">
    <text evidence="1">This protein is an aporepressor. When complexed with L-tryptophan it binds the operator region of the trp operon and prevents the initiation of transcription.</text>
</comment>
<comment type="subunit">
    <text evidence="1">Homodimer.</text>
</comment>
<comment type="subcellular location">
    <subcellularLocation>
        <location evidence="1">Cytoplasm</location>
    </subcellularLocation>
</comment>
<comment type="similarity">
    <text evidence="1">Belongs to the TrpR family.</text>
</comment>
<proteinExistence type="inferred from homology"/>
<sequence length="101" mass="11872">MYISRNLEQWNAFLQMLKIAFEENKAQEFLTLLLTADERDAVGLRLQIVSQLIDKNMPQREIQQNLNTSAATITRGSNMIKTMDPDFMQWMKQHLDLIEKN</sequence>
<keyword id="KW-0963">Cytoplasm</keyword>
<keyword id="KW-0238">DNA-binding</keyword>
<keyword id="KW-0678">Repressor</keyword>
<keyword id="KW-0804">Transcription</keyword>
<keyword id="KW-0805">Transcription regulation</keyword>
<accession>A5UDP4</accession>
<protein>
    <recommendedName>
        <fullName evidence="1">Trp operon repressor homolog</fullName>
    </recommendedName>
</protein>
<dbReference type="EMBL" id="CP000671">
    <property type="protein sequence ID" value="ABQ98895.1"/>
    <property type="molecule type" value="Genomic_DNA"/>
</dbReference>
<dbReference type="SMR" id="A5UDP4"/>
<dbReference type="KEGG" id="hip:CGSHiEE_07910"/>
<dbReference type="HOGENOM" id="CLU_147939_0_0_6"/>
<dbReference type="GO" id="GO:0005737">
    <property type="term" value="C:cytoplasm"/>
    <property type="evidence" value="ECO:0007669"/>
    <property type="project" value="UniProtKB-SubCell"/>
</dbReference>
<dbReference type="GO" id="GO:0003700">
    <property type="term" value="F:DNA-binding transcription factor activity"/>
    <property type="evidence" value="ECO:0007669"/>
    <property type="project" value="InterPro"/>
</dbReference>
<dbReference type="GO" id="GO:0043565">
    <property type="term" value="F:sequence-specific DNA binding"/>
    <property type="evidence" value="ECO:0007669"/>
    <property type="project" value="InterPro"/>
</dbReference>
<dbReference type="GO" id="GO:0045892">
    <property type="term" value="P:negative regulation of DNA-templated transcription"/>
    <property type="evidence" value="ECO:0007669"/>
    <property type="project" value="UniProtKB-UniRule"/>
</dbReference>
<dbReference type="Gene3D" id="1.10.1270.10">
    <property type="entry name" value="TrpR-like"/>
    <property type="match status" value="1"/>
</dbReference>
<dbReference type="HAMAP" id="MF_00475">
    <property type="entry name" value="Trp_repressor"/>
    <property type="match status" value="1"/>
</dbReference>
<dbReference type="InterPro" id="IPR000831">
    <property type="entry name" value="Trp_repress"/>
</dbReference>
<dbReference type="InterPro" id="IPR013335">
    <property type="entry name" value="Trp_repress_bac"/>
</dbReference>
<dbReference type="InterPro" id="IPR010921">
    <property type="entry name" value="Trp_repressor/repl_initiator"/>
</dbReference>
<dbReference type="InterPro" id="IPR038116">
    <property type="entry name" value="TrpR-like_sf"/>
</dbReference>
<dbReference type="NCBIfam" id="TIGR01321">
    <property type="entry name" value="TrpR"/>
    <property type="match status" value="1"/>
</dbReference>
<dbReference type="PANTHER" id="PTHR38025">
    <property type="entry name" value="TRP OPERON REPRESSOR"/>
    <property type="match status" value="1"/>
</dbReference>
<dbReference type="PANTHER" id="PTHR38025:SF1">
    <property type="entry name" value="TRP OPERON REPRESSOR"/>
    <property type="match status" value="1"/>
</dbReference>
<dbReference type="Pfam" id="PF01371">
    <property type="entry name" value="Trp_repressor"/>
    <property type="match status" value="1"/>
</dbReference>
<dbReference type="PIRSF" id="PIRSF003196">
    <property type="entry name" value="Trp_repressor"/>
    <property type="match status" value="1"/>
</dbReference>
<dbReference type="SUPFAM" id="SSF48295">
    <property type="entry name" value="TrpR-like"/>
    <property type="match status" value="1"/>
</dbReference>
<organism>
    <name type="scientific">Haemophilus influenzae (strain PittEE)</name>
    <dbReference type="NCBI Taxonomy" id="374930"/>
    <lineage>
        <taxon>Bacteria</taxon>
        <taxon>Pseudomonadati</taxon>
        <taxon>Pseudomonadota</taxon>
        <taxon>Gammaproteobacteria</taxon>
        <taxon>Pasteurellales</taxon>
        <taxon>Pasteurellaceae</taxon>
        <taxon>Haemophilus</taxon>
    </lineage>
</organism>
<reference key="1">
    <citation type="journal article" date="2007" name="Genome Biol.">
        <title>Characterization and modeling of the Haemophilus influenzae core and supragenomes based on the complete genomic sequences of Rd and 12 clinical nontypeable strains.</title>
        <authorList>
            <person name="Hogg J.S."/>
            <person name="Hu F.Z."/>
            <person name="Janto B."/>
            <person name="Boissy R."/>
            <person name="Hayes J."/>
            <person name="Keefe R."/>
            <person name="Post J.C."/>
            <person name="Ehrlich G.D."/>
        </authorList>
    </citation>
    <scope>NUCLEOTIDE SEQUENCE [LARGE SCALE GENOMIC DNA]</scope>
    <source>
        <strain>PittEE</strain>
    </source>
</reference>